<sequence>MKELQTVLKNHFAIEFADKKLLETAFTHTSYANEHRLLKISHNERLEFLGDAVLQLLISEYLYKKYPKKPEGDLSKLRAMIVREESLAGFARDCQFDQFIKLGKGEEKSGGRNRDTILGDAFEAFLGALLLDKDVAKVKEFIYQVMIPKVEAGEFEMITDYKTHLQELLQVNGDVAIRYQVISETGPAHDKVFDVEVLVEGKSIGQGQGRSKKLAEQEAAKNAVEKGLDSCI</sequence>
<keyword id="KW-0963">Cytoplasm</keyword>
<keyword id="KW-0255">Endonuclease</keyword>
<keyword id="KW-0378">Hydrolase</keyword>
<keyword id="KW-0460">Magnesium</keyword>
<keyword id="KW-0479">Metal-binding</keyword>
<keyword id="KW-0507">mRNA processing</keyword>
<keyword id="KW-0540">Nuclease</keyword>
<keyword id="KW-1185">Reference proteome</keyword>
<keyword id="KW-0694">RNA-binding</keyword>
<keyword id="KW-0698">rRNA processing</keyword>
<keyword id="KW-0699">rRNA-binding</keyword>
<keyword id="KW-0819">tRNA processing</keyword>
<gene>
    <name evidence="1" type="primary">rnc</name>
    <name type="ordered locus">SP_1248</name>
</gene>
<protein>
    <recommendedName>
        <fullName evidence="1">Ribonuclease 3</fullName>
        <ecNumber evidence="1">3.1.26.3</ecNumber>
    </recommendedName>
    <alternativeName>
        <fullName evidence="1">Ribonuclease III</fullName>
        <shortName evidence="1">RNase III</shortName>
    </alternativeName>
</protein>
<accession>Q97QG6</accession>
<name>RNC_STRPN</name>
<dbReference type="EC" id="3.1.26.3" evidence="1"/>
<dbReference type="EMBL" id="AE005672">
    <property type="protein sequence ID" value="AAK75353.1"/>
    <property type="molecule type" value="Genomic_DNA"/>
</dbReference>
<dbReference type="PIR" id="H95144">
    <property type="entry name" value="H95144"/>
</dbReference>
<dbReference type="RefSeq" id="WP_000661480.1">
    <property type="nucleotide sequence ID" value="NZ_CP155539.1"/>
</dbReference>
<dbReference type="SMR" id="Q97QG6"/>
<dbReference type="PaxDb" id="170187-SP_1248"/>
<dbReference type="EnsemblBacteria" id="AAK75353">
    <property type="protein sequence ID" value="AAK75353"/>
    <property type="gene ID" value="SP_1248"/>
</dbReference>
<dbReference type="KEGG" id="spn:SP_1248"/>
<dbReference type="eggNOG" id="COG0571">
    <property type="taxonomic scope" value="Bacteria"/>
</dbReference>
<dbReference type="PhylomeDB" id="Q97QG6"/>
<dbReference type="BioCyc" id="SPNE170187:G1FZB-1262-MONOMER"/>
<dbReference type="Proteomes" id="UP000000585">
    <property type="component" value="Chromosome"/>
</dbReference>
<dbReference type="GO" id="GO:0005737">
    <property type="term" value="C:cytoplasm"/>
    <property type="evidence" value="ECO:0007669"/>
    <property type="project" value="UniProtKB-SubCell"/>
</dbReference>
<dbReference type="GO" id="GO:0003725">
    <property type="term" value="F:double-stranded RNA binding"/>
    <property type="evidence" value="ECO:0007669"/>
    <property type="project" value="TreeGrafter"/>
</dbReference>
<dbReference type="GO" id="GO:0046872">
    <property type="term" value="F:metal ion binding"/>
    <property type="evidence" value="ECO:0007669"/>
    <property type="project" value="UniProtKB-KW"/>
</dbReference>
<dbReference type="GO" id="GO:0004525">
    <property type="term" value="F:ribonuclease III activity"/>
    <property type="evidence" value="ECO:0007669"/>
    <property type="project" value="UniProtKB-UniRule"/>
</dbReference>
<dbReference type="GO" id="GO:0019843">
    <property type="term" value="F:rRNA binding"/>
    <property type="evidence" value="ECO:0007669"/>
    <property type="project" value="UniProtKB-KW"/>
</dbReference>
<dbReference type="GO" id="GO:0006397">
    <property type="term" value="P:mRNA processing"/>
    <property type="evidence" value="ECO:0007669"/>
    <property type="project" value="UniProtKB-UniRule"/>
</dbReference>
<dbReference type="GO" id="GO:0010468">
    <property type="term" value="P:regulation of gene expression"/>
    <property type="evidence" value="ECO:0007669"/>
    <property type="project" value="TreeGrafter"/>
</dbReference>
<dbReference type="GO" id="GO:0006364">
    <property type="term" value="P:rRNA processing"/>
    <property type="evidence" value="ECO:0007669"/>
    <property type="project" value="UniProtKB-UniRule"/>
</dbReference>
<dbReference type="GO" id="GO:0008033">
    <property type="term" value="P:tRNA processing"/>
    <property type="evidence" value="ECO:0007669"/>
    <property type="project" value="UniProtKB-KW"/>
</dbReference>
<dbReference type="CDD" id="cd10845">
    <property type="entry name" value="DSRM_RNAse_III_family"/>
    <property type="match status" value="1"/>
</dbReference>
<dbReference type="CDD" id="cd00593">
    <property type="entry name" value="RIBOc"/>
    <property type="match status" value="1"/>
</dbReference>
<dbReference type="FunFam" id="1.10.1520.10:FF:000001">
    <property type="entry name" value="Ribonuclease 3"/>
    <property type="match status" value="1"/>
</dbReference>
<dbReference type="FunFam" id="3.30.160.20:FF:000003">
    <property type="entry name" value="Ribonuclease 3"/>
    <property type="match status" value="1"/>
</dbReference>
<dbReference type="Gene3D" id="3.30.160.20">
    <property type="match status" value="1"/>
</dbReference>
<dbReference type="Gene3D" id="1.10.1520.10">
    <property type="entry name" value="Ribonuclease III domain"/>
    <property type="match status" value="1"/>
</dbReference>
<dbReference type="HAMAP" id="MF_00104">
    <property type="entry name" value="RNase_III"/>
    <property type="match status" value="1"/>
</dbReference>
<dbReference type="InterPro" id="IPR014720">
    <property type="entry name" value="dsRBD_dom"/>
</dbReference>
<dbReference type="InterPro" id="IPR011907">
    <property type="entry name" value="RNase_III"/>
</dbReference>
<dbReference type="InterPro" id="IPR000999">
    <property type="entry name" value="RNase_III_dom"/>
</dbReference>
<dbReference type="InterPro" id="IPR036389">
    <property type="entry name" value="RNase_III_sf"/>
</dbReference>
<dbReference type="NCBIfam" id="TIGR02191">
    <property type="entry name" value="RNaseIII"/>
    <property type="match status" value="1"/>
</dbReference>
<dbReference type="PANTHER" id="PTHR11207:SF0">
    <property type="entry name" value="RIBONUCLEASE 3"/>
    <property type="match status" value="1"/>
</dbReference>
<dbReference type="PANTHER" id="PTHR11207">
    <property type="entry name" value="RIBONUCLEASE III"/>
    <property type="match status" value="1"/>
</dbReference>
<dbReference type="Pfam" id="PF00035">
    <property type="entry name" value="dsrm"/>
    <property type="match status" value="1"/>
</dbReference>
<dbReference type="Pfam" id="PF14622">
    <property type="entry name" value="Ribonucleas_3_3"/>
    <property type="match status" value="1"/>
</dbReference>
<dbReference type="SMART" id="SM00358">
    <property type="entry name" value="DSRM"/>
    <property type="match status" value="1"/>
</dbReference>
<dbReference type="SMART" id="SM00535">
    <property type="entry name" value="RIBOc"/>
    <property type="match status" value="1"/>
</dbReference>
<dbReference type="SUPFAM" id="SSF54768">
    <property type="entry name" value="dsRNA-binding domain-like"/>
    <property type="match status" value="1"/>
</dbReference>
<dbReference type="SUPFAM" id="SSF69065">
    <property type="entry name" value="RNase III domain-like"/>
    <property type="match status" value="1"/>
</dbReference>
<dbReference type="PROSITE" id="PS50137">
    <property type="entry name" value="DS_RBD"/>
    <property type="match status" value="1"/>
</dbReference>
<dbReference type="PROSITE" id="PS00517">
    <property type="entry name" value="RNASE_3_1"/>
    <property type="match status" value="1"/>
</dbReference>
<dbReference type="PROSITE" id="PS50142">
    <property type="entry name" value="RNASE_3_2"/>
    <property type="match status" value="1"/>
</dbReference>
<feature type="chain" id="PRO_0000180441" description="Ribonuclease 3">
    <location>
        <begin position="1"/>
        <end position="232"/>
    </location>
</feature>
<feature type="domain" description="RNase III" evidence="1">
    <location>
        <begin position="5"/>
        <end position="134"/>
    </location>
</feature>
<feature type="domain" description="DRBM" evidence="1">
    <location>
        <begin position="160"/>
        <end position="229"/>
    </location>
</feature>
<feature type="active site" evidence="1">
    <location>
        <position position="51"/>
    </location>
</feature>
<feature type="active site" evidence="1">
    <location>
        <position position="123"/>
    </location>
</feature>
<feature type="binding site" evidence="1">
    <location>
        <position position="47"/>
    </location>
    <ligand>
        <name>Mg(2+)</name>
        <dbReference type="ChEBI" id="CHEBI:18420"/>
    </ligand>
</feature>
<feature type="binding site" evidence="1">
    <location>
        <position position="120"/>
    </location>
    <ligand>
        <name>Mg(2+)</name>
        <dbReference type="ChEBI" id="CHEBI:18420"/>
    </ligand>
</feature>
<feature type="binding site" evidence="1">
    <location>
        <position position="123"/>
    </location>
    <ligand>
        <name>Mg(2+)</name>
        <dbReference type="ChEBI" id="CHEBI:18420"/>
    </ligand>
</feature>
<proteinExistence type="inferred from homology"/>
<organism>
    <name type="scientific">Streptococcus pneumoniae serotype 4 (strain ATCC BAA-334 / TIGR4)</name>
    <dbReference type="NCBI Taxonomy" id="170187"/>
    <lineage>
        <taxon>Bacteria</taxon>
        <taxon>Bacillati</taxon>
        <taxon>Bacillota</taxon>
        <taxon>Bacilli</taxon>
        <taxon>Lactobacillales</taxon>
        <taxon>Streptococcaceae</taxon>
        <taxon>Streptococcus</taxon>
    </lineage>
</organism>
<comment type="function">
    <text evidence="1">Digests double-stranded RNA. Involved in the processing of primary rRNA transcript to yield the immediate precursors to the large and small rRNAs (23S and 16S). Processes some mRNAs, and tRNAs when they are encoded in the rRNA operon. Processes pre-crRNA and tracrRNA of type II CRISPR loci if present in the organism.</text>
</comment>
<comment type="catalytic activity">
    <reaction evidence="1">
        <text>Endonucleolytic cleavage to 5'-phosphomonoester.</text>
        <dbReference type="EC" id="3.1.26.3"/>
    </reaction>
</comment>
<comment type="cofactor">
    <cofactor evidence="1">
        <name>Mg(2+)</name>
        <dbReference type="ChEBI" id="CHEBI:18420"/>
    </cofactor>
</comment>
<comment type="subunit">
    <text evidence="1">Homodimer.</text>
</comment>
<comment type="subcellular location">
    <subcellularLocation>
        <location evidence="1">Cytoplasm</location>
    </subcellularLocation>
</comment>
<comment type="similarity">
    <text evidence="1">Belongs to the ribonuclease III family.</text>
</comment>
<evidence type="ECO:0000255" key="1">
    <source>
        <dbReference type="HAMAP-Rule" id="MF_00104"/>
    </source>
</evidence>
<reference key="1">
    <citation type="journal article" date="2001" name="Science">
        <title>Complete genome sequence of a virulent isolate of Streptococcus pneumoniae.</title>
        <authorList>
            <person name="Tettelin H."/>
            <person name="Nelson K.E."/>
            <person name="Paulsen I.T."/>
            <person name="Eisen J.A."/>
            <person name="Read T.D."/>
            <person name="Peterson S.N."/>
            <person name="Heidelberg J.F."/>
            <person name="DeBoy R.T."/>
            <person name="Haft D.H."/>
            <person name="Dodson R.J."/>
            <person name="Durkin A.S."/>
            <person name="Gwinn M.L."/>
            <person name="Kolonay J.F."/>
            <person name="Nelson W.C."/>
            <person name="Peterson J.D."/>
            <person name="Umayam L.A."/>
            <person name="White O."/>
            <person name="Salzberg S.L."/>
            <person name="Lewis M.R."/>
            <person name="Radune D."/>
            <person name="Holtzapple E.K."/>
            <person name="Khouri H.M."/>
            <person name="Wolf A.M."/>
            <person name="Utterback T.R."/>
            <person name="Hansen C.L."/>
            <person name="McDonald L.A."/>
            <person name="Feldblyum T.V."/>
            <person name="Angiuoli S.V."/>
            <person name="Dickinson T."/>
            <person name="Hickey E.K."/>
            <person name="Holt I.E."/>
            <person name="Loftus B.J."/>
            <person name="Yang F."/>
            <person name="Smith H.O."/>
            <person name="Venter J.C."/>
            <person name="Dougherty B.A."/>
            <person name="Morrison D.A."/>
            <person name="Hollingshead S.K."/>
            <person name="Fraser C.M."/>
        </authorList>
    </citation>
    <scope>NUCLEOTIDE SEQUENCE [LARGE SCALE GENOMIC DNA]</scope>
    <source>
        <strain>ATCC BAA-334 / TIGR4</strain>
    </source>
</reference>